<gene>
    <name evidence="1" type="primary">trpD</name>
    <name type="ordered locus">plu2464</name>
</gene>
<reference key="1">
    <citation type="journal article" date="2003" name="Nat. Biotechnol.">
        <title>The genome sequence of the entomopathogenic bacterium Photorhabdus luminescens.</title>
        <authorList>
            <person name="Duchaud E."/>
            <person name="Rusniok C."/>
            <person name="Frangeul L."/>
            <person name="Buchrieser C."/>
            <person name="Givaudan A."/>
            <person name="Taourit S."/>
            <person name="Bocs S."/>
            <person name="Boursaux-Eude C."/>
            <person name="Chandler M."/>
            <person name="Charles J.-F."/>
            <person name="Dassa E."/>
            <person name="Derose R."/>
            <person name="Derzelle S."/>
            <person name="Freyssinet G."/>
            <person name="Gaudriault S."/>
            <person name="Medigue C."/>
            <person name="Lanois A."/>
            <person name="Powell K."/>
            <person name="Siguier P."/>
            <person name="Vincent R."/>
            <person name="Wingate V."/>
            <person name="Zouine M."/>
            <person name="Glaser P."/>
            <person name="Boemare N."/>
            <person name="Danchin A."/>
            <person name="Kunst F."/>
        </authorList>
    </citation>
    <scope>NUCLEOTIDE SEQUENCE [LARGE SCALE GENOMIC DNA]</scope>
    <source>
        <strain>DSM 15139 / CIP 105565 / TT01</strain>
    </source>
</reference>
<sequence>MQAIFNKLFNAQTLTQQESQQLFAAIIQGELSEPQLAAVLISMKLRGEQPQEIAGAAQALLANALPFPRPDYTFCDIVGTGGDGANSINISTASAFVASACQIKIAKHGNRSVSSQSGSSDLLAAFGIALDISAECARSALDEIGICFLFAPHYHLGFCHAMPVRQQLKTRTIFNILGPLINPARPPLALIGVYSPELVEPIARTLLVLGYQRAAVVHSGGMDEVALHAPTKVAEINDGEIIHYQLNAEDFGLQRHPMSALKGGSPVDNHEMLSLLLQGRGKKAHADAVAANVALLMKIHGQEDLRHNTQQALETIHSGRAYERVIALATRS</sequence>
<evidence type="ECO:0000255" key="1">
    <source>
        <dbReference type="HAMAP-Rule" id="MF_00211"/>
    </source>
</evidence>
<proteinExistence type="inferred from homology"/>
<accession>Q7N488</accession>
<organism>
    <name type="scientific">Photorhabdus laumondii subsp. laumondii (strain DSM 15139 / CIP 105565 / TT01)</name>
    <name type="common">Photorhabdus luminescens subsp. laumondii</name>
    <dbReference type="NCBI Taxonomy" id="243265"/>
    <lineage>
        <taxon>Bacteria</taxon>
        <taxon>Pseudomonadati</taxon>
        <taxon>Pseudomonadota</taxon>
        <taxon>Gammaproteobacteria</taxon>
        <taxon>Enterobacterales</taxon>
        <taxon>Morganellaceae</taxon>
        <taxon>Photorhabdus</taxon>
    </lineage>
</organism>
<feature type="chain" id="PRO_0000227177" description="Anthranilate phosphoribosyltransferase">
    <location>
        <begin position="1"/>
        <end position="332"/>
    </location>
</feature>
<feature type="binding site" evidence="1">
    <location>
        <position position="79"/>
    </location>
    <ligand>
        <name>5-phospho-alpha-D-ribose 1-diphosphate</name>
        <dbReference type="ChEBI" id="CHEBI:58017"/>
    </ligand>
</feature>
<feature type="binding site" evidence="1">
    <location>
        <position position="79"/>
    </location>
    <ligand>
        <name>anthranilate</name>
        <dbReference type="ChEBI" id="CHEBI:16567"/>
        <label>1</label>
    </ligand>
</feature>
<feature type="binding site" evidence="1">
    <location>
        <begin position="82"/>
        <end position="83"/>
    </location>
    <ligand>
        <name>5-phospho-alpha-D-ribose 1-diphosphate</name>
        <dbReference type="ChEBI" id="CHEBI:58017"/>
    </ligand>
</feature>
<feature type="binding site" evidence="1">
    <location>
        <position position="87"/>
    </location>
    <ligand>
        <name>5-phospho-alpha-D-ribose 1-diphosphate</name>
        <dbReference type="ChEBI" id="CHEBI:58017"/>
    </ligand>
</feature>
<feature type="binding site" evidence="1">
    <location>
        <begin position="89"/>
        <end position="92"/>
    </location>
    <ligand>
        <name>5-phospho-alpha-D-ribose 1-diphosphate</name>
        <dbReference type="ChEBI" id="CHEBI:58017"/>
    </ligand>
</feature>
<feature type="binding site" evidence="1">
    <location>
        <position position="91"/>
    </location>
    <ligand>
        <name>Mg(2+)</name>
        <dbReference type="ChEBI" id="CHEBI:18420"/>
        <label>1</label>
    </ligand>
</feature>
<feature type="binding site" evidence="1">
    <location>
        <begin position="107"/>
        <end position="115"/>
    </location>
    <ligand>
        <name>5-phospho-alpha-D-ribose 1-diphosphate</name>
        <dbReference type="ChEBI" id="CHEBI:58017"/>
    </ligand>
</feature>
<feature type="binding site" evidence="1">
    <location>
        <position position="110"/>
    </location>
    <ligand>
        <name>anthranilate</name>
        <dbReference type="ChEBI" id="CHEBI:16567"/>
        <label>1</label>
    </ligand>
</feature>
<feature type="binding site" evidence="1">
    <location>
        <position position="119"/>
    </location>
    <ligand>
        <name>5-phospho-alpha-D-ribose 1-diphosphate</name>
        <dbReference type="ChEBI" id="CHEBI:58017"/>
    </ligand>
</feature>
<feature type="binding site" evidence="1">
    <location>
        <position position="165"/>
    </location>
    <ligand>
        <name>anthranilate</name>
        <dbReference type="ChEBI" id="CHEBI:16567"/>
        <label>2</label>
    </ligand>
</feature>
<feature type="binding site" evidence="1">
    <location>
        <position position="223"/>
    </location>
    <ligand>
        <name>Mg(2+)</name>
        <dbReference type="ChEBI" id="CHEBI:18420"/>
        <label>2</label>
    </ligand>
</feature>
<feature type="binding site" evidence="1">
    <location>
        <position position="224"/>
    </location>
    <ligand>
        <name>Mg(2+)</name>
        <dbReference type="ChEBI" id="CHEBI:18420"/>
        <label>1</label>
    </ligand>
</feature>
<feature type="binding site" evidence="1">
    <location>
        <position position="224"/>
    </location>
    <ligand>
        <name>Mg(2+)</name>
        <dbReference type="ChEBI" id="CHEBI:18420"/>
        <label>2</label>
    </ligand>
</feature>
<name>TRPD_PHOLL</name>
<comment type="function">
    <text evidence="1">Catalyzes the transfer of the phosphoribosyl group of 5-phosphorylribose-1-pyrophosphate (PRPP) to anthranilate to yield N-(5'-phosphoribosyl)-anthranilate (PRA).</text>
</comment>
<comment type="catalytic activity">
    <reaction evidence="1">
        <text>N-(5-phospho-beta-D-ribosyl)anthranilate + diphosphate = 5-phospho-alpha-D-ribose 1-diphosphate + anthranilate</text>
        <dbReference type="Rhea" id="RHEA:11768"/>
        <dbReference type="ChEBI" id="CHEBI:16567"/>
        <dbReference type="ChEBI" id="CHEBI:18277"/>
        <dbReference type="ChEBI" id="CHEBI:33019"/>
        <dbReference type="ChEBI" id="CHEBI:58017"/>
        <dbReference type="EC" id="2.4.2.18"/>
    </reaction>
</comment>
<comment type="cofactor">
    <cofactor evidence="1">
        <name>Mg(2+)</name>
        <dbReference type="ChEBI" id="CHEBI:18420"/>
    </cofactor>
    <text evidence="1">Binds 2 magnesium ions per monomer.</text>
</comment>
<comment type="pathway">
    <text evidence="1">Amino-acid biosynthesis; L-tryptophan biosynthesis; L-tryptophan from chorismate: step 2/5.</text>
</comment>
<comment type="subunit">
    <text evidence="1">Homodimer.</text>
</comment>
<comment type="similarity">
    <text evidence="1">Belongs to the anthranilate phosphoribosyltransferase family.</text>
</comment>
<dbReference type="EC" id="2.4.2.18" evidence="1"/>
<dbReference type="EMBL" id="BX571867">
    <property type="protein sequence ID" value="CAE14838.1"/>
    <property type="molecule type" value="Genomic_DNA"/>
</dbReference>
<dbReference type="RefSeq" id="WP_011146688.1">
    <property type="nucleotide sequence ID" value="NC_005126.1"/>
</dbReference>
<dbReference type="SMR" id="Q7N488"/>
<dbReference type="STRING" id="243265.plu2464"/>
<dbReference type="GeneID" id="48848730"/>
<dbReference type="KEGG" id="plu:plu2464"/>
<dbReference type="eggNOG" id="COG0547">
    <property type="taxonomic scope" value="Bacteria"/>
</dbReference>
<dbReference type="HOGENOM" id="CLU_034315_2_1_6"/>
<dbReference type="OrthoDB" id="9806430at2"/>
<dbReference type="UniPathway" id="UPA00035">
    <property type="reaction ID" value="UER00041"/>
</dbReference>
<dbReference type="Proteomes" id="UP000002514">
    <property type="component" value="Chromosome"/>
</dbReference>
<dbReference type="GO" id="GO:0005829">
    <property type="term" value="C:cytosol"/>
    <property type="evidence" value="ECO:0007669"/>
    <property type="project" value="TreeGrafter"/>
</dbReference>
<dbReference type="GO" id="GO:0004048">
    <property type="term" value="F:anthranilate phosphoribosyltransferase activity"/>
    <property type="evidence" value="ECO:0007669"/>
    <property type="project" value="UniProtKB-UniRule"/>
</dbReference>
<dbReference type="GO" id="GO:0000287">
    <property type="term" value="F:magnesium ion binding"/>
    <property type="evidence" value="ECO:0007669"/>
    <property type="project" value="UniProtKB-UniRule"/>
</dbReference>
<dbReference type="GO" id="GO:0000162">
    <property type="term" value="P:L-tryptophan biosynthetic process"/>
    <property type="evidence" value="ECO:0007669"/>
    <property type="project" value="UniProtKB-UniRule"/>
</dbReference>
<dbReference type="FunFam" id="1.20.970.10:FF:000003">
    <property type="entry name" value="Anthranilate phosphoribosyltransferase"/>
    <property type="match status" value="1"/>
</dbReference>
<dbReference type="FunFam" id="3.40.1030.10:FF:000002">
    <property type="entry name" value="Anthranilate phosphoribosyltransferase"/>
    <property type="match status" value="1"/>
</dbReference>
<dbReference type="Gene3D" id="3.40.1030.10">
    <property type="entry name" value="Nucleoside phosphorylase/phosphoribosyltransferase catalytic domain"/>
    <property type="match status" value="1"/>
</dbReference>
<dbReference type="Gene3D" id="1.20.970.10">
    <property type="entry name" value="Transferase, Pyrimidine Nucleoside Phosphorylase, Chain C"/>
    <property type="match status" value="1"/>
</dbReference>
<dbReference type="HAMAP" id="MF_00211">
    <property type="entry name" value="TrpD"/>
    <property type="match status" value="1"/>
</dbReference>
<dbReference type="InterPro" id="IPR005940">
    <property type="entry name" value="Anthranilate_Pribosyl_Tfrase"/>
</dbReference>
<dbReference type="InterPro" id="IPR000312">
    <property type="entry name" value="Glycosyl_Trfase_fam3"/>
</dbReference>
<dbReference type="InterPro" id="IPR017459">
    <property type="entry name" value="Glycosyl_Trfase_fam3_N_dom"/>
</dbReference>
<dbReference type="InterPro" id="IPR036320">
    <property type="entry name" value="Glycosyl_Trfase_fam3_N_dom_sf"/>
</dbReference>
<dbReference type="InterPro" id="IPR035902">
    <property type="entry name" value="Nuc_phospho_transferase"/>
</dbReference>
<dbReference type="NCBIfam" id="TIGR01245">
    <property type="entry name" value="trpD"/>
    <property type="match status" value="1"/>
</dbReference>
<dbReference type="PANTHER" id="PTHR43285">
    <property type="entry name" value="ANTHRANILATE PHOSPHORIBOSYLTRANSFERASE"/>
    <property type="match status" value="1"/>
</dbReference>
<dbReference type="PANTHER" id="PTHR43285:SF2">
    <property type="entry name" value="ANTHRANILATE PHOSPHORIBOSYLTRANSFERASE"/>
    <property type="match status" value="1"/>
</dbReference>
<dbReference type="Pfam" id="PF02885">
    <property type="entry name" value="Glycos_trans_3N"/>
    <property type="match status" value="1"/>
</dbReference>
<dbReference type="Pfam" id="PF00591">
    <property type="entry name" value="Glycos_transf_3"/>
    <property type="match status" value="1"/>
</dbReference>
<dbReference type="SUPFAM" id="SSF52418">
    <property type="entry name" value="Nucleoside phosphorylase/phosphoribosyltransferase catalytic domain"/>
    <property type="match status" value="1"/>
</dbReference>
<dbReference type="SUPFAM" id="SSF47648">
    <property type="entry name" value="Nucleoside phosphorylase/phosphoribosyltransferase N-terminal domain"/>
    <property type="match status" value="1"/>
</dbReference>
<protein>
    <recommendedName>
        <fullName evidence="1">Anthranilate phosphoribosyltransferase</fullName>
        <ecNumber evidence="1">2.4.2.18</ecNumber>
    </recommendedName>
</protein>
<keyword id="KW-0028">Amino-acid biosynthesis</keyword>
<keyword id="KW-0057">Aromatic amino acid biosynthesis</keyword>
<keyword id="KW-0328">Glycosyltransferase</keyword>
<keyword id="KW-0460">Magnesium</keyword>
<keyword id="KW-0479">Metal-binding</keyword>
<keyword id="KW-1185">Reference proteome</keyword>
<keyword id="KW-0808">Transferase</keyword>
<keyword id="KW-0822">Tryptophan biosynthesis</keyword>